<evidence type="ECO:0000255" key="1">
    <source>
        <dbReference type="HAMAP-Rule" id="MF_01527"/>
    </source>
</evidence>
<sequence>MNSPIDPAIVMPDVQSSADTRHIQIQRVGIRGVRHPMLVVAGDGSAQATVANWTLTVALPAEEKGTHMSRFVALLEKYRATPMTPALFSQMAREMLPLLHAERGDLTAAFPYFINKSAPVSGVQSLLDYEVIWTARAAGDEVEFELRVQVPVTSLCPCSKAISEYGAHNQRSHVTVSAVMEGDVAMDAIIRLVEDEGSCELWGLLKRPDEKYVTERAYDNPKFVEDLVRDVAARLKAHPSVARFCVEAENFESIHNHSAYAVVEG</sequence>
<organism>
    <name type="scientific">Bordetella avium (strain 197N)</name>
    <dbReference type="NCBI Taxonomy" id="360910"/>
    <lineage>
        <taxon>Bacteria</taxon>
        <taxon>Pseudomonadati</taxon>
        <taxon>Pseudomonadota</taxon>
        <taxon>Betaproteobacteria</taxon>
        <taxon>Burkholderiales</taxon>
        <taxon>Alcaligenaceae</taxon>
        <taxon>Bordetella</taxon>
    </lineage>
</organism>
<protein>
    <recommendedName>
        <fullName evidence="1">GTP cyclohydrolase FolE2</fullName>
        <ecNumber evidence="1">3.5.4.16</ecNumber>
    </recommendedName>
</protein>
<dbReference type="EC" id="3.5.4.16" evidence="1"/>
<dbReference type="EMBL" id="AM167904">
    <property type="protein sequence ID" value="CAJ49785.1"/>
    <property type="molecule type" value="Genomic_DNA"/>
</dbReference>
<dbReference type="RefSeq" id="WP_012417837.1">
    <property type="nucleotide sequence ID" value="NC_010645.1"/>
</dbReference>
<dbReference type="SMR" id="Q2KZ16"/>
<dbReference type="STRING" id="360910.BAV2176"/>
<dbReference type="GeneID" id="92934763"/>
<dbReference type="KEGG" id="bav:BAV2176"/>
<dbReference type="eggNOG" id="COG1469">
    <property type="taxonomic scope" value="Bacteria"/>
</dbReference>
<dbReference type="HOGENOM" id="CLU_062816_1_1_4"/>
<dbReference type="OrthoDB" id="9774824at2"/>
<dbReference type="UniPathway" id="UPA00848">
    <property type="reaction ID" value="UER00151"/>
</dbReference>
<dbReference type="Proteomes" id="UP000001977">
    <property type="component" value="Chromosome"/>
</dbReference>
<dbReference type="GO" id="GO:0003934">
    <property type="term" value="F:GTP cyclohydrolase I activity"/>
    <property type="evidence" value="ECO:0007669"/>
    <property type="project" value="UniProtKB-UniRule"/>
</dbReference>
<dbReference type="GO" id="GO:0046654">
    <property type="term" value="P:tetrahydrofolate biosynthetic process"/>
    <property type="evidence" value="ECO:0007669"/>
    <property type="project" value="UniProtKB-UniRule"/>
</dbReference>
<dbReference type="Gene3D" id="3.10.270.10">
    <property type="entry name" value="Urate Oxidase"/>
    <property type="match status" value="1"/>
</dbReference>
<dbReference type="HAMAP" id="MF_01527_B">
    <property type="entry name" value="GTP_cyclohydrol_B"/>
    <property type="match status" value="1"/>
</dbReference>
<dbReference type="InterPro" id="IPR022838">
    <property type="entry name" value="GTP_cyclohydrolase_FolE2"/>
</dbReference>
<dbReference type="InterPro" id="IPR003801">
    <property type="entry name" value="GTP_cyclohydrolase_FolE2/MptA"/>
</dbReference>
<dbReference type="NCBIfam" id="NF010200">
    <property type="entry name" value="PRK13674.1-1"/>
    <property type="match status" value="1"/>
</dbReference>
<dbReference type="PANTHER" id="PTHR36445">
    <property type="entry name" value="GTP CYCLOHYDROLASE MPTA"/>
    <property type="match status" value="1"/>
</dbReference>
<dbReference type="PANTHER" id="PTHR36445:SF1">
    <property type="entry name" value="GTP CYCLOHYDROLASE MPTA"/>
    <property type="match status" value="1"/>
</dbReference>
<dbReference type="Pfam" id="PF02649">
    <property type="entry name" value="GCHY-1"/>
    <property type="match status" value="1"/>
</dbReference>
<comment type="function">
    <text evidence="1">Converts GTP to 7,8-dihydroneopterin triphosphate.</text>
</comment>
<comment type="catalytic activity">
    <reaction evidence="1">
        <text>GTP + H2O = 7,8-dihydroneopterin 3'-triphosphate + formate + H(+)</text>
        <dbReference type="Rhea" id="RHEA:17473"/>
        <dbReference type="ChEBI" id="CHEBI:15377"/>
        <dbReference type="ChEBI" id="CHEBI:15378"/>
        <dbReference type="ChEBI" id="CHEBI:15740"/>
        <dbReference type="ChEBI" id="CHEBI:37565"/>
        <dbReference type="ChEBI" id="CHEBI:58462"/>
        <dbReference type="EC" id="3.5.4.16"/>
    </reaction>
</comment>
<comment type="pathway">
    <text evidence="1">Cofactor biosynthesis; 7,8-dihydroneopterin triphosphate biosynthesis; 7,8-dihydroneopterin triphosphate from GTP: step 1/1.</text>
</comment>
<comment type="similarity">
    <text evidence="1">Belongs to the GTP cyclohydrolase IV family.</text>
</comment>
<proteinExistence type="inferred from homology"/>
<gene>
    <name evidence="1" type="primary">folE2</name>
    <name type="ordered locus">BAV2176</name>
</gene>
<feature type="chain" id="PRO_0000289474" description="GTP cyclohydrolase FolE2">
    <location>
        <begin position="1"/>
        <end position="265"/>
    </location>
</feature>
<feature type="site" description="May be catalytically important" evidence="1">
    <location>
        <position position="156"/>
    </location>
</feature>
<accession>Q2KZ16</accession>
<reference key="1">
    <citation type="journal article" date="2006" name="J. Bacteriol.">
        <title>Comparison of the genome sequence of the poultry pathogen Bordetella avium with those of B. bronchiseptica, B. pertussis, and B. parapertussis reveals extensive diversity in surface structures associated with host interaction.</title>
        <authorList>
            <person name="Sebaihia M."/>
            <person name="Preston A."/>
            <person name="Maskell D.J."/>
            <person name="Kuzmiak H."/>
            <person name="Connell T.D."/>
            <person name="King N.D."/>
            <person name="Orndorff P.E."/>
            <person name="Miyamoto D.M."/>
            <person name="Thomson N.R."/>
            <person name="Harris D."/>
            <person name="Goble A."/>
            <person name="Lord A."/>
            <person name="Murphy L."/>
            <person name="Quail M.A."/>
            <person name="Rutter S."/>
            <person name="Squares R."/>
            <person name="Squares S."/>
            <person name="Woodward J."/>
            <person name="Parkhill J."/>
            <person name="Temple L.M."/>
        </authorList>
    </citation>
    <scope>NUCLEOTIDE SEQUENCE [LARGE SCALE GENOMIC DNA]</scope>
    <source>
        <strain>197N</strain>
    </source>
</reference>
<keyword id="KW-0378">Hydrolase</keyword>
<keyword id="KW-1185">Reference proteome</keyword>
<name>GCH4_BORA1</name>